<dbReference type="EMBL" id="EU262887">
    <property type="protein sequence ID" value="ABW98738.1"/>
    <property type="molecule type" value="Genomic_DNA"/>
</dbReference>
<dbReference type="RefSeq" id="YP_001687171.1">
    <property type="nucleotide sequence ID" value="NC_010358.2"/>
</dbReference>
<dbReference type="SMR" id="B0Z4R0"/>
<dbReference type="GeneID" id="5951927"/>
<dbReference type="GO" id="GO:0009507">
    <property type="term" value="C:chloroplast"/>
    <property type="evidence" value="ECO:0007669"/>
    <property type="project" value="UniProtKB-SubCell"/>
</dbReference>
<dbReference type="GO" id="GO:1990904">
    <property type="term" value="C:ribonucleoprotein complex"/>
    <property type="evidence" value="ECO:0007669"/>
    <property type="project" value="UniProtKB-KW"/>
</dbReference>
<dbReference type="GO" id="GO:0005840">
    <property type="term" value="C:ribosome"/>
    <property type="evidence" value="ECO:0007669"/>
    <property type="project" value="UniProtKB-KW"/>
</dbReference>
<dbReference type="GO" id="GO:0003735">
    <property type="term" value="F:structural constituent of ribosome"/>
    <property type="evidence" value="ECO:0007669"/>
    <property type="project" value="InterPro"/>
</dbReference>
<dbReference type="GO" id="GO:0006412">
    <property type="term" value="P:translation"/>
    <property type="evidence" value="ECO:0007669"/>
    <property type="project" value="UniProtKB-UniRule"/>
</dbReference>
<dbReference type="HAMAP" id="MF_00251">
    <property type="entry name" value="Ribosomal_bL36"/>
    <property type="match status" value="1"/>
</dbReference>
<dbReference type="InterPro" id="IPR000473">
    <property type="entry name" value="Ribosomal_bL36"/>
</dbReference>
<dbReference type="InterPro" id="IPR035977">
    <property type="entry name" value="Ribosomal_bL36_sp"/>
</dbReference>
<dbReference type="NCBIfam" id="TIGR01022">
    <property type="entry name" value="rpmJ_bact"/>
    <property type="match status" value="1"/>
</dbReference>
<dbReference type="PANTHER" id="PTHR42888">
    <property type="entry name" value="50S RIBOSOMAL PROTEIN L36, CHLOROPLASTIC"/>
    <property type="match status" value="1"/>
</dbReference>
<dbReference type="PANTHER" id="PTHR42888:SF1">
    <property type="entry name" value="LARGE RIBOSOMAL SUBUNIT PROTEIN BL36C"/>
    <property type="match status" value="1"/>
</dbReference>
<dbReference type="Pfam" id="PF00444">
    <property type="entry name" value="Ribosomal_L36"/>
    <property type="match status" value="1"/>
</dbReference>
<dbReference type="SUPFAM" id="SSF57840">
    <property type="entry name" value="Ribosomal protein L36"/>
    <property type="match status" value="1"/>
</dbReference>
<dbReference type="PROSITE" id="PS00828">
    <property type="entry name" value="RIBOSOMAL_L36"/>
    <property type="match status" value="1"/>
</dbReference>
<proteinExistence type="inferred from homology"/>
<reference key="1">
    <citation type="journal article" date="2008" name="Nucleic Acids Res.">
        <title>The complete nucleotide sequences of the five genetically distinct plastid genomes of Oenothera, subsection Oenothera: I. Sequence evaluation and plastome evolution.</title>
        <authorList>
            <person name="Greiner S."/>
            <person name="Wang X."/>
            <person name="Rauwolf U."/>
            <person name="Silber M.V."/>
            <person name="Mayer K."/>
            <person name="Meurer J."/>
            <person name="Haberer G."/>
            <person name="Herrmann R.G."/>
        </authorList>
    </citation>
    <scope>NUCLEOTIDE SEQUENCE [LARGE SCALE GENOMIC DNA]</scope>
    <source>
        <strain>cv. Douthat 1</strain>
    </source>
</reference>
<keyword id="KW-0150">Chloroplast</keyword>
<keyword id="KW-0934">Plastid</keyword>
<keyword id="KW-0687">Ribonucleoprotein</keyword>
<keyword id="KW-0689">Ribosomal protein</keyword>
<sequence>MKIRASVRKICTKCRLIRRRGRIIVICSNPRHKQRQG</sequence>
<feature type="chain" id="PRO_0000344773" description="Large ribosomal subunit protein bL36c">
    <location>
        <begin position="1"/>
        <end position="37"/>
    </location>
</feature>
<gene>
    <name evidence="1" type="primary">rpl36</name>
</gene>
<organism>
    <name type="scientific">Oenothera argillicola</name>
    <name type="common">Appalachian evening primrose</name>
    <dbReference type="NCBI Taxonomy" id="3940"/>
    <lineage>
        <taxon>Eukaryota</taxon>
        <taxon>Viridiplantae</taxon>
        <taxon>Streptophyta</taxon>
        <taxon>Embryophyta</taxon>
        <taxon>Tracheophyta</taxon>
        <taxon>Spermatophyta</taxon>
        <taxon>Magnoliopsida</taxon>
        <taxon>eudicotyledons</taxon>
        <taxon>Gunneridae</taxon>
        <taxon>Pentapetalae</taxon>
        <taxon>rosids</taxon>
        <taxon>malvids</taxon>
        <taxon>Myrtales</taxon>
        <taxon>Onagraceae</taxon>
        <taxon>Onagroideae</taxon>
        <taxon>Onagreae</taxon>
        <taxon>Oenothera</taxon>
    </lineage>
</organism>
<evidence type="ECO:0000255" key="1">
    <source>
        <dbReference type="HAMAP-Rule" id="MF_00251"/>
    </source>
</evidence>
<evidence type="ECO:0000305" key="2"/>
<geneLocation type="chloroplast"/>
<accession>B0Z4R0</accession>
<comment type="subcellular location">
    <subcellularLocation>
        <location>Plastid</location>
        <location>Chloroplast</location>
    </subcellularLocation>
</comment>
<comment type="similarity">
    <text evidence="1">Belongs to the bacterial ribosomal protein bL36 family.</text>
</comment>
<protein>
    <recommendedName>
        <fullName evidence="1">Large ribosomal subunit protein bL36c</fullName>
    </recommendedName>
    <alternativeName>
        <fullName evidence="2">50S ribosomal protein L36, chloroplastic</fullName>
    </alternativeName>
</protein>
<name>RK36_OENAR</name>